<feature type="chain" id="PRO_0000420069" description="P3N-PIPO polyprotein">
    <location>
        <begin position="1"/>
        <end position="985"/>
    </location>
</feature>
<feature type="chain" id="PRO_0000420070" description="P1 protease" evidence="4">
    <location>
        <begin position="1"/>
        <end position="287"/>
    </location>
</feature>
<feature type="chain" id="PRO_0000420071" description="Helper component proteinase" evidence="4">
    <location>
        <begin position="288"/>
        <end position="743"/>
    </location>
</feature>
<feature type="chain" id="PRO_0000408545" description="Movement protein P3N-PIPO">
    <location>
        <begin position="744"/>
        <end position="985"/>
    </location>
</feature>
<feature type="domain" description="Peptidase S30" evidence="6">
    <location>
        <begin position="144"/>
        <end position="287"/>
    </location>
</feature>
<feature type="domain" description="Peptidase C6" evidence="5">
    <location>
        <begin position="621"/>
        <end position="743"/>
    </location>
</feature>
<feature type="short sequence motif" description="Involved in interaction with stylet and aphid transmission" evidence="1">
    <location>
        <begin position="337"/>
        <end position="340"/>
    </location>
</feature>
<feature type="short sequence motif" description="Involved in virions binding and aphid transmission" evidence="1">
    <location>
        <begin position="595"/>
        <end position="597"/>
    </location>
</feature>
<feature type="active site" description="For P1 proteinase activity" evidence="6">
    <location>
        <position position="195"/>
    </location>
</feature>
<feature type="active site" description="For P1 proteinase activity" evidence="6">
    <location>
        <position position="204"/>
    </location>
</feature>
<feature type="active site" description="For P1 proteinase activity" evidence="6">
    <location>
        <position position="238"/>
    </location>
</feature>
<feature type="active site" description="For helper component proteinase activity" evidence="5">
    <location>
        <position position="629"/>
    </location>
</feature>
<feature type="active site" description="For helper component proteinase activity" evidence="5">
    <location>
        <position position="702"/>
    </location>
</feature>
<feature type="site" description="Cleavage; by P1 proteinase" evidence="6">
    <location>
        <begin position="287"/>
        <end position="288"/>
    </location>
</feature>
<feature type="site" description="Cleavage; by autolysis" evidence="5">
    <location>
        <begin position="743"/>
        <end position="744"/>
    </location>
</feature>
<feature type="unsure residue">
    <location>
        <begin position="909"/>
        <end position="915"/>
    </location>
</feature>
<organism>
    <name type="scientific">Pepper mottle virus (isolate California)</name>
    <name type="common">PeMV</name>
    <name type="synonym">PepMoV C</name>
    <dbReference type="NCBI Taxonomy" id="31737"/>
    <lineage>
        <taxon>Viruses</taxon>
        <taxon>Riboviria</taxon>
        <taxon>Orthornavirae</taxon>
        <taxon>Pisuviricota</taxon>
        <taxon>Stelpaviricetes</taxon>
        <taxon>Patatavirales</taxon>
        <taxon>Potyviridae</taxon>
        <taxon>Potyvirus</taxon>
        <taxon>Potyvirus capsimaculae</taxon>
        <taxon>Pepper mottle virus</taxon>
    </lineage>
</organism>
<evidence type="ECO:0000250" key="1"/>
<evidence type="ECO:0000250" key="2">
    <source>
        <dbReference type="UniProtKB" id="P04517"/>
    </source>
</evidence>
<evidence type="ECO:0000250" key="3">
    <source>
        <dbReference type="UniProtKB" id="P0CK11"/>
    </source>
</evidence>
<evidence type="ECO:0000255" key="4"/>
<evidence type="ECO:0000255" key="5">
    <source>
        <dbReference type="PROSITE-ProRule" id="PRU01080"/>
    </source>
</evidence>
<evidence type="ECO:0000255" key="6">
    <source>
        <dbReference type="PROSITE-ProRule" id="PRU01219"/>
    </source>
</evidence>
<evidence type="ECO:0000305" key="7"/>
<protein>
    <recommendedName>
        <fullName>P3N-PIPO polyprotein</fullName>
    </recommendedName>
    <component>
        <recommendedName>
            <fullName>P1 protease</fullName>
            <ecNumber>3.4.21.-</ecNumber>
        </recommendedName>
        <alternativeName>
            <fullName>N-terminal protein</fullName>
        </alternativeName>
        <alternativeName>
            <fullName>P1 proteinase</fullName>
        </alternativeName>
    </component>
    <component>
        <recommendedName>
            <fullName>Helper component proteinase</fullName>
            <shortName>HC-pro</shortName>
            <ecNumber>3.4.22.45</ecNumber>
        </recommendedName>
    </component>
    <component>
        <recommendedName>
            <fullName>Movement protein P3N-PIPO</fullName>
        </recommendedName>
        <alternativeName>
            <fullName>Pretty interesting potyviridae ORF</fullName>
            <shortName>PIPO</shortName>
        </alternativeName>
    </component>
</protein>
<sequence>MATSVIQFGSFVCNLPKSQPLCTTVHCPKQSMSTNIVRPSDPFAELEKHLEPYLQKRMDATIRQTKGGTLVYKHMSEAKRARKLRKKQREEEEVRLFMNAAPYIVSNITIGGGEVPSKMEEVSIKRPLNKTPSRKIKKSLTPVTFRDGHMNKFLRELRDCATRNSMTVHLIGKRKTELAFKRRASLNAVYATLHHMRGVDRKRDIVLEEWMNDYVLNLSKVSTWGSLFHAESLKRGDSGLILNARALRGKFGRCSRGFFIVRGKSDGVVLDARSKLSMATVTHMEQYSTPEAFWSGLEKKWSVVRKPTAHTCKPTYSVSNCGEVAAIIAQALFPCHKLTCGECSKEICDLTSNECVQELYKNTSLALERMNNLHPEFQHIVKVLSVVRQLTEASNHGTETFDEIFKMIGSKTQSPFTHLNKLNEFMLKGNENTSGEWLTARQHLRELVRFQKNRTDNIKKGDLASFRNKLSARAQYNLYLSCDNQLDKNASFLWGQREYHARRFFLNFFQQIDPSKGYLAYEDRTIPNGSRKLAIGNLIVPLDLAEFRKRMNGIDTQQPPIGKYCTSQLDGNFVYPCCCTTLDDGQPIRSAVYAPTKKHLVVGNTGDTKYINLPKGDTEMLYIALDGYCYINIYLAMLVNISEEEAKDFTKKVRDIFMPKLGKWPTLMDLATTCAQLRIFHPDVHDAELPRILVDHNTQTCHVVDSYGSISTGYHILKAATVSQLVLFADDNLESEIKHYRVGGIVENHKVQIDNQPSRCGVSEFHAIRMLIKGIYRPSVMYELLSEEPYLLVFSILSPSILIAMYNDRAFELAVQIWLEKEQSIPLIATILTNLAAKVSVATTLVQQLQLIELSADQLLNVTCDGFRVSFAYQSALTLLTRMRDQAKANSELISGGFNEYDQDLAWTLEKKLSRPLTRPMERIKLAGKISLLLVLKKAKDSFAVKYQKQKFARCQRNIQFITETIYGKGFLPHESRSSVHQARN</sequence>
<dbReference type="EC" id="3.4.21.-"/>
<dbReference type="EC" id="3.4.22.45"/>
<dbReference type="EMBL" id="M96425">
    <property type="status" value="NOT_ANNOTATED_CDS"/>
    <property type="molecule type" value="Genomic_RNA"/>
</dbReference>
<dbReference type="SMR" id="P0CK01"/>
<dbReference type="Proteomes" id="UP000008157">
    <property type="component" value="Segment"/>
</dbReference>
<dbReference type="GO" id="GO:0044219">
    <property type="term" value="C:host cell plasmodesma"/>
    <property type="evidence" value="ECO:0007669"/>
    <property type="project" value="UniProtKB-SubCell"/>
</dbReference>
<dbReference type="GO" id="GO:0004197">
    <property type="term" value="F:cysteine-type endopeptidase activity"/>
    <property type="evidence" value="ECO:0007669"/>
    <property type="project" value="InterPro"/>
</dbReference>
<dbReference type="GO" id="GO:0008236">
    <property type="term" value="F:serine-type peptidase activity"/>
    <property type="evidence" value="ECO:0007669"/>
    <property type="project" value="UniProtKB-KW"/>
</dbReference>
<dbReference type="GO" id="GO:0006508">
    <property type="term" value="P:proteolysis"/>
    <property type="evidence" value="ECO:0007669"/>
    <property type="project" value="UniProtKB-KW"/>
</dbReference>
<dbReference type="GO" id="GO:0052170">
    <property type="term" value="P:symbiont-mediated suppression of host innate immune response"/>
    <property type="evidence" value="ECO:0007669"/>
    <property type="project" value="UniProtKB-KW"/>
</dbReference>
<dbReference type="GO" id="GO:0046740">
    <property type="term" value="P:transport of virus in host, cell to cell"/>
    <property type="evidence" value="ECO:0007669"/>
    <property type="project" value="UniProtKB-KW"/>
</dbReference>
<dbReference type="GO" id="GO:0075523">
    <property type="term" value="P:viral translational frameshifting"/>
    <property type="evidence" value="ECO:0007669"/>
    <property type="project" value="UniProtKB-KW"/>
</dbReference>
<dbReference type="Gene3D" id="3.90.70.150">
    <property type="entry name" value="Helper component proteinase"/>
    <property type="match status" value="1"/>
</dbReference>
<dbReference type="InterPro" id="IPR001456">
    <property type="entry name" value="HC-pro"/>
</dbReference>
<dbReference type="InterPro" id="IPR031159">
    <property type="entry name" value="HC_PRO_CPD_dom"/>
</dbReference>
<dbReference type="InterPro" id="IPR042308">
    <property type="entry name" value="HC_PRO_CPD_sf"/>
</dbReference>
<dbReference type="InterPro" id="IPR002540">
    <property type="entry name" value="Pept_S30_P1_potyvir"/>
</dbReference>
<dbReference type="InterPro" id="IPR039560">
    <property type="entry name" value="Potyvirid-P3"/>
</dbReference>
<dbReference type="Pfam" id="PF00851">
    <property type="entry name" value="Peptidase_C6"/>
    <property type="match status" value="1"/>
</dbReference>
<dbReference type="Pfam" id="PF01577">
    <property type="entry name" value="Peptidase_S30"/>
    <property type="match status" value="1"/>
</dbReference>
<dbReference type="Pfam" id="PF13608">
    <property type="entry name" value="Potyvirid-P3"/>
    <property type="match status" value="1"/>
</dbReference>
<dbReference type="PROSITE" id="PS51744">
    <property type="entry name" value="HC_PRO_CPD"/>
    <property type="match status" value="1"/>
</dbReference>
<dbReference type="PROSITE" id="PS51871">
    <property type="entry name" value="PV_P1_PRO"/>
    <property type="match status" value="1"/>
</dbReference>
<comment type="function">
    <molecule>Helper component proteinase</molecule>
    <text evidence="2">Required for aphid transmission and also has proteolytic activity. Only cleaves a Gly-Gly dipeptide at its own C-terminus. Interacts with virions and aphid stylets. Acts as a suppressor of RNA-mediated gene silencing, also known as post-transcriptional gene silencing (PTGS), a mechanism of plant viral defense that limits the accumulation of viral RNAs. May have RNA-binding activity.</text>
</comment>
<comment type="function">
    <molecule>Movement protein P3N-PIPO</molecule>
    <text evidence="3">Allows efficient cell to cell propagation, by bypassing the host cell wall barrier. Transports viral genome to neighboring plant cells directly through plasmosdesmata, without any budding.</text>
</comment>
<comment type="catalytic activity">
    <molecule>Helper component proteinase</molecule>
    <reaction>
        <text>Hydrolyzes a Gly-|-Gly bond at its own C-terminus, commonly in the sequence -Tyr-Xaa-Val-Gly-|-Gly, in the processing of the potyviral polyprotein.</text>
        <dbReference type="EC" id="3.4.22.45"/>
    </reaction>
</comment>
<comment type="subunit">
    <molecule>Movement protein P3N-PIPO</molecule>
    <text evidence="3">Interacts (via PIPO domain) with host PCaP1 protein; this interaction may help to anchor the movement complex to the plasma membrane from which the complex could move to the plasmodesmata.</text>
</comment>
<comment type="subcellular location">
    <molecule>Movement protein P3N-PIPO</molecule>
    <subcellularLocation>
        <location evidence="3">Host cell junction</location>
        <location evidence="3">Host plasmodesma</location>
    </subcellularLocation>
</comment>
<comment type="alternative products">
    <event type="ribosomal frameshifting"/>
    <isoform>
        <id>P0CK01-1</id>
        <name>P3N-PIPO polyprotein</name>
        <sequence type="displayed"/>
    </isoform>
    <isoform>
        <id>Q01500-1</id>
        <name>Genome polyprotein</name>
        <sequence type="external"/>
    </isoform>
</comment>
<comment type="domain">
    <text evidence="1">The N-terminus of helper component proteinase is involved in interaction with stylets. The central part is involved in interaction with virions and the C-terminus is involved in cell-to cell movement of the virus (By similarity).</text>
</comment>
<comment type="PTM">
    <text evidence="1">Potyviral RNA is expressed as two polyproteins which undergo post-translational proteolytic processing. Genome polyprotein is processed by NIa-pro, P1 and HC-pro proteinases resulting in the production of at least ten individual proteins. P3N-PIPO is cleaved by P1 and HC-pro proteinases resulting in the production of three individual proteins. The P1 proteinase and the HC-pro cleave only their respective C-termini autocatalytically (By similarity).</text>
</comment>
<comment type="miscellaneous">
    <molecule>Isoform P3N-PIPO polyprotein</molecule>
    <text>Produced by -1 ribosomal frameshifting in P3 ORF.</text>
</comment>
<comment type="similarity">
    <text evidence="7">Belongs to the potyviridae P3N-PIPO polyprotein family.</text>
</comment>
<proteinExistence type="inferred from homology"/>
<accession>P0CK01</accession>
<keyword id="KW-1031">Host cell junction</keyword>
<keyword id="KW-0945">Host-virus interaction</keyword>
<keyword id="KW-0378">Hydrolase</keyword>
<keyword id="KW-1090">Inhibition of host innate immune response by virus</keyword>
<keyword id="KW-0645">Protease</keyword>
<keyword id="KW-0688">Ribosomal frameshifting</keyword>
<keyword id="KW-0720">Serine protease</keyword>
<keyword id="KW-0941">Suppressor of RNA silencing</keyword>
<keyword id="KW-0813">Transport</keyword>
<keyword id="KW-0899">Viral immunoevasion</keyword>
<keyword id="KW-0916">Viral movement protein</keyword>
<organismHost>
    <name type="scientific">Capsicum annuum</name>
    <name type="common">Capsicum pepper</name>
    <dbReference type="NCBI Taxonomy" id="4072"/>
</organismHost>
<organismHost>
    <name type="scientific">Datura inoxia</name>
    <name type="common">Downy thornapple</name>
    <name type="synonym">Datura meteloides</name>
    <dbReference type="NCBI Taxonomy" id="4075"/>
</organismHost>
<organismHost>
    <name type="scientific">Solanum</name>
    <dbReference type="NCBI Taxonomy" id="4107"/>
</organismHost>
<reference key="1">
    <citation type="journal article" date="1992" name="Virology">
        <title>The complete nucleotide sequence of pepper mottle virus genomic RNA: comparison of the encoded polyprotein with those of other sequenced potyviruses.</title>
        <authorList>
            <person name="Vance V.B."/>
            <person name="Moore D."/>
            <person name="Turpen T.H."/>
            <person name="Bracker A."/>
            <person name="Hollowell V.C."/>
        </authorList>
    </citation>
    <scope>NUCLEOTIDE SEQUENCE [GENOMIC RNA]</scope>
</reference>
<name>MVP_PEMVC</name>